<dbReference type="EMBL" id="GEUW01000054">
    <property type="protein sequence ID" value="JAW06991.1"/>
    <property type="molecule type" value="Transcribed_RNA"/>
</dbReference>
<dbReference type="EMBL" id="GEUW01000013">
    <property type="protein sequence ID" value="JAW07032.1"/>
    <property type="molecule type" value="Transcribed_RNA"/>
</dbReference>
<dbReference type="GO" id="GO:0005576">
    <property type="term" value="C:extracellular region"/>
    <property type="evidence" value="ECO:0007669"/>
    <property type="project" value="UniProtKB-SubCell"/>
</dbReference>
<dbReference type="CDD" id="cd05380">
    <property type="entry name" value="CAP_euk"/>
    <property type="match status" value="1"/>
</dbReference>
<dbReference type="Gene3D" id="3.40.33.10">
    <property type="entry name" value="CAP"/>
    <property type="match status" value="1"/>
</dbReference>
<dbReference type="InterPro" id="IPR018244">
    <property type="entry name" value="Allrgn_V5/Tpx1_CS"/>
</dbReference>
<dbReference type="InterPro" id="IPR014044">
    <property type="entry name" value="CAP_dom"/>
</dbReference>
<dbReference type="InterPro" id="IPR035940">
    <property type="entry name" value="CAP_sf"/>
</dbReference>
<dbReference type="InterPro" id="IPR001283">
    <property type="entry name" value="CRISP-related"/>
</dbReference>
<dbReference type="InterPro" id="IPR002413">
    <property type="entry name" value="V5_allergen-like"/>
</dbReference>
<dbReference type="PANTHER" id="PTHR10334">
    <property type="entry name" value="CYSTEINE-RICH SECRETORY PROTEIN-RELATED"/>
    <property type="match status" value="1"/>
</dbReference>
<dbReference type="Pfam" id="PF00188">
    <property type="entry name" value="CAP"/>
    <property type="match status" value="1"/>
</dbReference>
<dbReference type="PRINTS" id="PR00838">
    <property type="entry name" value="V5ALLERGEN"/>
</dbReference>
<dbReference type="PRINTS" id="PR00837">
    <property type="entry name" value="V5TPXLIKE"/>
</dbReference>
<dbReference type="SMART" id="SM00198">
    <property type="entry name" value="SCP"/>
    <property type="match status" value="1"/>
</dbReference>
<dbReference type="SUPFAM" id="SSF55797">
    <property type="entry name" value="PR-1-like"/>
    <property type="match status" value="1"/>
</dbReference>
<dbReference type="PROSITE" id="PS01009">
    <property type="entry name" value="CRISP_1"/>
    <property type="match status" value="1"/>
</dbReference>
<dbReference type="PROSITE" id="PS01010">
    <property type="entry name" value="CRISP_2"/>
    <property type="match status" value="1"/>
</dbReference>
<comment type="function">
    <molecule>Cryptide Pep-4</molecule>
    <text evidence="1">Presents weak lactate dehydrogenase (LDH) release from mast cells. Does not induce hemolytic activity, mast cell degranulation, and antimicrobial effects. In vivo, injection into mice causes moderate edema formation, but induces very weak or no change in nociceptive sensibility. It also causes an alteration in rearing (standing on hind limbs), but does not impact locomotion.</text>
</comment>
<comment type="subcellular location">
    <subcellularLocation>
        <location evidence="3">Secreted</location>
    </subcellularLocation>
</comment>
<comment type="tissue specificity">
    <text evidence="5">Expressed by the venom gland.</text>
</comment>
<comment type="PTM">
    <text evidence="4">Contains 9 disulfide bonds.</text>
</comment>
<comment type="allergen">
    <text evidence="2">Causes an allergic reaction in human.</text>
</comment>
<comment type="miscellaneous">
    <text evidence="4">The primary structure of this cryptide Pep-4 is identical to that of cryptide Pep-4 from Tityus obscursus (AC P0DRE9).</text>
</comment>
<comment type="similarity">
    <text evidence="4">Belongs to the CRISP family. Venom allergen 5-like subfamily.</text>
</comment>
<accession>P85840</accession>
<accession>A0A218QX21</accession>
<name>VA5_TITSE</name>
<proteinExistence type="evidence at protein level"/>
<organism>
    <name type="scientific">Tityus serrulatus</name>
    <name type="common">Brazilian scorpion</name>
    <dbReference type="NCBI Taxonomy" id="6887"/>
    <lineage>
        <taxon>Eukaryota</taxon>
        <taxon>Metazoa</taxon>
        <taxon>Ecdysozoa</taxon>
        <taxon>Arthropoda</taxon>
        <taxon>Chelicerata</taxon>
        <taxon>Arachnida</taxon>
        <taxon>Scorpiones</taxon>
        <taxon>Buthida</taxon>
        <taxon>Buthoidea</taxon>
        <taxon>Buthidae</taxon>
        <taxon>Tityus</taxon>
    </lineage>
</organism>
<feature type="signal peptide" evidence="3">
    <location>
        <begin position="1"/>
        <end position="24"/>
    </location>
</feature>
<feature type="chain" id="PRO_5011910070" description="Venom allergen 5">
    <location>
        <begin position="25"/>
        <end position="416"/>
    </location>
</feature>
<feature type="peptide" id="PRO_0000461719" description="Cryptide Pep-4" evidence="1">
    <location>
        <begin position="72"/>
        <end position="82"/>
    </location>
</feature>
<feature type="domain" description="SCP">
    <location>
        <begin position="57"/>
        <end position="217"/>
    </location>
</feature>
<feature type="modified residue" description="Arginine amide; in Cryptide Pep-4" evidence="1">
    <location>
        <position position="82"/>
    </location>
</feature>
<feature type="sequence conflict" description="In Ref. 2; AA sequence." evidence="4" ref="2">
    <original>TT</original>
    <variation>RG</variation>
    <location>
        <begin position="133"/>
        <end position="134"/>
    </location>
</feature>
<feature type="sequence conflict" description="In Ref. 2; AA sequence." evidence="4" ref="2">
    <original>D</original>
    <variation>K</variation>
    <location>
        <position position="199"/>
    </location>
</feature>
<feature type="sequence conflict" description="In Ref. 2; AA sequence." evidence="4" ref="2">
    <original>K</original>
    <variation>HN</variation>
    <location>
        <position position="243"/>
    </location>
</feature>
<feature type="sequence conflict" description="In Ref. 2; AA sequence." evidence="4" ref="2">
    <location>
        <begin position="281"/>
        <end position="282"/>
    </location>
</feature>
<reference evidence="6" key="1">
    <citation type="submission" date="2016-05" db="EMBL/GenBank/DDBJ databases">
        <title>Comparative transcriptomes and proteomes of Brazilian medically important scorpions Tityus serrulatus from Parana and Sao Paulo.</title>
        <authorList>
            <person name="Oliveira U.C."/>
            <person name="Nishiyama M.Y. Jr."/>
            <person name="Candido D.M."/>
            <person name="Yamanouye N."/>
            <person name="Dorce V.A."/>
            <person name="Junqueira-de-Azevedo I.L."/>
        </authorList>
    </citation>
    <scope>NUCLEOTIDE SEQUENCE [MRNA]</scope>
    <source>
        <tissue>Telson</tissue>
    </source>
</reference>
<reference key="2">
    <citation type="submission" date="2008-05" db="UniProtKB">
        <title>Allergenic protein from venom of Brazilian scorpion Tityus serrulatus.</title>
        <authorList>
            <person name="Richardson M."/>
            <person name="Borges M.H."/>
            <person name="Cordeiro M.N."/>
            <person name="Pimenta A.M.C."/>
            <person name="de Lima M.E."/>
            <person name="Rates B."/>
        </authorList>
    </citation>
    <scope>PROTEIN SEQUENCE OF 25-144 AND 199-291</scope>
    <scope>SUBCELLULAR LOCATION</scope>
    <source>
        <tissue>Venom</tissue>
    </source>
</reference>
<sequence>MKGILLLFLKLVVLFVYLCSSVLSECPALYRRYSKEHTFCKTKNQKCNIKRWGVSQDDRNTIINLHNKVRNNIALGQDQSGRLPAAGDMLEMEWDDELAQIAQKLADQCVFKHDCDDCRKVENFDVGQNIFTTTITAVEIPDPFWVDAIRSWYNEIYRFTRDFIKPFTSDHATGHFTQMVWSKTWRVGCGYVLYEKRKDSWTQLYVCNYGPAGNLDDSELYKVDKPCEKCPSNTCCGSHCKKKKSTSYLGLCDVLNGSGPDFDETDFSNYIFNCDFKPESSSDCNNKVEGSNKWQTRQIISDVYKTVVLNGGENTVLKFTSNIQSKDGFCLTVSFRKGPNIAGTNNVGEFDVQLERKGAKPLNFRLDSDGNQFLPYSMGIPMNHPMQINIKFSVPKGAPAQYLDISYIRARPGLCN</sequence>
<evidence type="ECO:0000250" key="1">
    <source>
        <dbReference type="UniProtKB" id="P0DRE9"/>
    </source>
</evidence>
<evidence type="ECO:0000250" key="2">
    <source>
        <dbReference type="UniProtKB" id="P10736"/>
    </source>
</evidence>
<evidence type="ECO:0000269" key="3">
    <source ref="2"/>
</evidence>
<evidence type="ECO:0000305" key="4"/>
<evidence type="ECO:0000305" key="5">
    <source ref="2"/>
</evidence>
<evidence type="ECO:0000312" key="6">
    <source>
        <dbReference type="EMBL" id="JAW06991.1"/>
    </source>
</evidence>
<keyword id="KW-0020">Allergen</keyword>
<keyword id="KW-0027">Amidation</keyword>
<keyword id="KW-0903">Direct protein sequencing</keyword>
<keyword id="KW-1015">Disulfide bond</keyword>
<keyword id="KW-0964">Secreted</keyword>
<keyword id="KW-0732">Signal</keyword>
<protein>
    <recommendedName>
        <fullName>Venom allergen 5</fullName>
    </recommendedName>
    <alternativeName>
        <fullName>Antigen 5</fullName>
    </alternativeName>
    <alternativeName>
        <fullName>Cysteine-rich venom protein</fullName>
        <shortName>CRVP</shortName>
    </alternativeName>
    <component>
        <recommendedName>
            <fullName evidence="1">Cryptide Pep-4</fullName>
        </recommendedName>
    </component>
</protein>